<proteinExistence type="evidence at protein level"/>
<sequence>MPFTKMCTSKLANPLMKYYLNLNGKSPLSKLSNSLNSSSFKFISCSPHIVCRELNTVSGVAIRPQTITKDDKRDFMAVFPDIVRDLTQLNPGISDLSTLISKLMQYNVSGGKKVRGLTVVYSYRMLAPDHALTPENIRLAQILGWCVEMLQGFFVVIDDLADQSVTRRGRPCWYRLPGVGLRASSDALLIQSGCFQLLQQHCKDKEFYVDLVELFLDALRRTTYGQTLDYVSSFPNINHLTMDRYNFITKYKTAYYTYHLPVATAMYMAGIYNAELHRQAKSVLLEMGHYFQVQDDYLDVFGDEEMIGKKGTDIQEGKCTWLAIIAFQRASPPQREVLESCYGTKEPEKIKKVKDIFIELSLPAVYHAYEEETYNLITRQIQQLSQGLPHELFLTLLHKLYGRKQ</sequence>
<name>FPPS_MURHI</name>
<organism>
    <name type="scientific">Murgantia histrionica</name>
    <name type="common">Harlequin bug</name>
    <dbReference type="NCBI Taxonomy" id="460024"/>
    <lineage>
        <taxon>Eukaryota</taxon>
        <taxon>Metazoa</taxon>
        <taxon>Ecdysozoa</taxon>
        <taxon>Arthropoda</taxon>
        <taxon>Hexapoda</taxon>
        <taxon>Insecta</taxon>
        <taxon>Pterygota</taxon>
        <taxon>Neoptera</taxon>
        <taxon>Paraneoptera</taxon>
        <taxon>Hemiptera</taxon>
        <taxon>Heteroptera</taxon>
        <taxon>Panheteroptera</taxon>
        <taxon>Pentatomomorpha</taxon>
        <taxon>Pentatomoidea</taxon>
        <taxon>Pentatomidae</taxon>
        <taxon>Pentatominae</taxon>
        <taxon>Murgantia</taxon>
    </lineage>
</organism>
<comment type="function">
    <text evidence="2">Farnesyl pyrophosphate synthase involved in murgantiol biosynthesis, a male-released aggregation pheromone, by catalyzing the formation of (2E,6E)-farnesyl diphosphate.</text>
</comment>
<comment type="catalytic activity">
    <reaction evidence="2">
        <text>isopentenyl diphosphate + (2E)-geranyl diphosphate = (2E,6E)-farnesyl diphosphate + diphosphate</text>
        <dbReference type="Rhea" id="RHEA:19361"/>
        <dbReference type="ChEBI" id="CHEBI:33019"/>
        <dbReference type="ChEBI" id="CHEBI:58057"/>
        <dbReference type="ChEBI" id="CHEBI:128769"/>
        <dbReference type="ChEBI" id="CHEBI:175763"/>
        <dbReference type="EC" id="2.5.1.10"/>
    </reaction>
    <physiologicalReaction direction="left-to-right" evidence="2">
        <dbReference type="Rhea" id="RHEA:19362"/>
    </physiologicalReaction>
</comment>
<comment type="cofactor">
    <cofactor evidence="1">
        <name>Mg(2+)</name>
        <dbReference type="ChEBI" id="CHEBI:18420"/>
    </cofactor>
    <text evidence="1">Binds 2 Mg(2+) ions per subunit.</text>
</comment>
<comment type="pathway">
    <text evidence="2">Pheromone biosynthesis.</text>
</comment>
<comment type="domain">
    <text evidence="4">The Asp-Asp-Xaa-Xaa-Asp/Glu (DDXXD/E) motif is important for the catalytic activity, presumably through binding to Mg(2+).</text>
</comment>
<comment type="similarity">
    <text evidence="4">Belongs to the FPP/GGPP synthase family.</text>
</comment>
<dbReference type="EC" id="2.5.1.10" evidence="2"/>
<dbReference type="EMBL" id="MG662379">
    <property type="protein sequence ID" value="AVZ23978.1"/>
    <property type="molecule type" value="mRNA"/>
</dbReference>
<dbReference type="SMR" id="A0A343W970"/>
<dbReference type="GO" id="GO:0005737">
    <property type="term" value="C:cytoplasm"/>
    <property type="evidence" value="ECO:0007669"/>
    <property type="project" value="TreeGrafter"/>
</dbReference>
<dbReference type="GO" id="GO:0004337">
    <property type="term" value="F:(2E,6E)-farnesyl diphosphate synthase activity"/>
    <property type="evidence" value="ECO:0000314"/>
    <property type="project" value="UniProtKB"/>
</dbReference>
<dbReference type="GO" id="GO:0004161">
    <property type="term" value="F:dimethylallyltranstransferase activity"/>
    <property type="evidence" value="ECO:0007669"/>
    <property type="project" value="TreeGrafter"/>
</dbReference>
<dbReference type="GO" id="GO:0046872">
    <property type="term" value="F:metal ion binding"/>
    <property type="evidence" value="ECO:0007669"/>
    <property type="project" value="UniProtKB-KW"/>
</dbReference>
<dbReference type="GO" id="GO:0045337">
    <property type="term" value="P:farnesyl diphosphate biosynthetic process"/>
    <property type="evidence" value="ECO:0007669"/>
    <property type="project" value="TreeGrafter"/>
</dbReference>
<dbReference type="GO" id="GO:0008299">
    <property type="term" value="P:isoprenoid biosynthetic process"/>
    <property type="evidence" value="ECO:0000314"/>
    <property type="project" value="UniProtKB"/>
</dbReference>
<dbReference type="GO" id="GO:0042811">
    <property type="term" value="P:pheromone biosynthetic process"/>
    <property type="evidence" value="ECO:0000314"/>
    <property type="project" value="UniProtKB"/>
</dbReference>
<dbReference type="CDD" id="cd00685">
    <property type="entry name" value="Trans_IPPS_HT"/>
    <property type="match status" value="1"/>
</dbReference>
<dbReference type="FunFam" id="1.10.600.10:FF:000021">
    <property type="entry name" value="Farnesyl pyrophosphate synthase"/>
    <property type="match status" value="1"/>
</dbReference>
<dbReference type="Gene3D" id="1.10.600.10">
    <property type="entry name" value="Farnesyl Diphosphate Synthase"/>
    <property type="match status" value="1"/>
</dbReference>
<dbReference type="InterPro" id="IPR039702">
    <property type="entry name" value="FPS1-like"/>
</dbReference>
<dbReference type="InterPro" id="IPR008949">
    <property type="entry name" value="Isoprenoid_synthase_dom_sf"/>
</dbReference>
<dbReference type="InterPro" id="IPR000092">
    <property type="entry name" value="Polyprenyl_synt"/>
</dbReference>
<dbReference type="InterPro" id="IPR033749">
    <property type="entry name" value="Polyprenyl_synt_CS"/>
</dbReference>
<dbReference type="PANTHER" id="PTHR11525:SF0">
    <property type="entry name" value="FARNESYL PYROPHOSPHATE SYNTHASE"/>
    <property type="match status" value="1"/>
</dbReference>
<dbReference type="PANTHER" id="PTHR11525">
    <property type="entry name" value="FARNESYL-PYROPHOSPHATE SYNTHETASE"/>
    <property type="match status" value="1"/>
</dbReference>
<dbReference type="Pfam" id="PF00348">
    <property type="entry name" value="polyprenyl_synt"/>
    <property type="match status" value="1"/>
</dbReference>
<dbReference type="SFLD" id="SFLDS00005">
    <property type="entry name" value="Isoprenoid_Synthase_Type_I"/>
    <property type="match status" value="1"/>
</dbReference>
<dbReference type="SFLD" id="SFLDG01017">
    <property type="entry name" value="Polyprenyl_Transferase_Like"/>
    <property type="match status" value="1"/>
</dbReference>
<dbReference type="SUPFAM" id="SSF48576">
    <property type="entry name" value="Terpenoid synthases"/>
    <property type="match status" value="1"/>
</dbReference>
<dbReference type="PROSITE" id="PS00723">
    <property type="entry name" value="POLYPRENYL_SYNTHASE_1"/>
    <property type="match status" value="1"/>
</dbReference>
<dbReference type="PROSITE" id="PS00444">
    <property type="entry name" value="POLYPRENYL_SYNTHASE_2"/>
    <property type="match status" value="1"/>
</dbReference>
<evidence type="ECO:0000250" key="1">
    <source>
        <dbReference type="UniProtKB" id="P14324"/>
    </source>
</evidence>
<evidence type="ECO:0000269" key="2">
    <source>
    </source>
</evidence>
<evidence type="ECO:0000303" key="3">
    <source>
    </source>
</evidence>
<evidence type="ECO:0000305" key="4"/>
<accession>A0A343W970</accession>
<feature type="chain" id="PRO_0000455289" description="Farnesyl pyrophosphate synthase">
    <location>
        <begin position="1"/>
        <end position="405"/>
    </location>
</feature>
<feature type="short sequence motif" description="DDXXD motif" evidence="4">
    <location>
        <begin position="158"/>
        <end position="162"/>
    </location>
</feature>
<feature type="binding site" evidence="1">
    <location>
        <position position="158"/>
    </location>
    <ligand>
        <name>Mg(2+)</name>
        <dbReference type="ChEBI" id="CHEBI:18420"/>
        <label>1</label>
    </ligand>
</feature>
<feature type="binding site" evidence="1">
    <location>
        <position position="158"/>
    </location>
    <ligand>
        <name>Mg(2+)</name>
        <dbReference type="ChEBI" id="CHEBI:18420"/>
        <label>2</label>
    </ligand>
</feature>
<feature type="binding site" evidence="1">
    <location>
        <position position="162"/>
    </location>
    <ligand>
        <name>Mg(2+)</name>
        <dbReference type="ChEBI" id="CHEBI:18420"/>
        <label>1</label>
    </ligand>
</feature>
<feature type="binding site" evidence="1">
    <location>
        <position position="162"/>
    </location>
    <ligand>
        <name>Mg(2+)</name>
        <dbReference type="ChEBI" id="CHEBI:18420"/>
        <label>2</label>
    </ligand>
</feature>
<feature type="mutagenesis site" description="Abolished farnesyl pyrophosphate synthase activity." evidence="2">
    <original>KKVR</original>
    <variation>SDAW</variation>
    <location>
        <begin position="112"/>
        <end position="115"/>
    </location>
</feature>
<feature type="mutagenesis site" description="Converts the enzyme into a 20-carbon geranylgeranyl diphosphate synthase." evidence="2">
    <original>FF</original>
    <variation>MS</variation>
    <location>
        <begin position="153"/>
        <end position="154"/>
    </location>
</feature>
<protein>
    <recommendedName>
        <fullName evidence="3">Farnesyl pyrophosphate synthase</fullName>
        <shortName evidence="3">MhFPPS</shortName>
        <shortName evidence="3">MhIDS-2</shortName>
        <ecNumber evidence="2">2.5.1.10</ecNumber>
    </recommendedName>
</protein>
<reference key="1">
    <citation type="journal article" date="2018" name="Proc. Natl. Acad. Sci. U.S.A.">
        <title>De novo formation of an aggregation pheromone precursor by an isoprenyl diphosphate synthase-related terpene synthase in the harlequin bug.</title>
        <authorList>
            <person name="Lancaster J."/>
            <person name="Khrimian A."/>
            <person name="Young S."/>
            <person name="Lehner B."/>
            <person name="Luck K."/>
            <person name="Wallingford A."/>
            <person name="Ghosh S.K.B."/>
            <person name="Zerbe P."/>
            <person name="Muchlinski A."/>
            <person name="Marek P.E."/>
            <person name="Sparks M.E."/>
            <person name="Tokuhisa J.G."/>
            <person name="Tittiger C."/>
            <person name="Koellner T.G."/>
            <person name="Weber D.C."/>
            <person name="Gundersen-Rindal D.E."/>
            <person name="Kuhar T.P."/>
            <person name="Tholl D."/>
        </authorList>
    </citation>
    <scope>NUCLEOTIDE SEQUENCE [MRNA]</scope>
    <scope>FUNCTION</scope>
    <scope>CATALYTIC ACTIVITY</scope>
    <scope>PATHWAY</scope>
    <scope>MUTAGENESIS OF 112-LYS--ARG-115 AND 153-PHE-PHE-154</scope>
</reference>
<keyword id="KW-0414">Isoprene biosynthesis</keyword>
<keyword id="KW-0460">Magnesium</keyword>
<keyword id="KW-0479">Metal-binding</keyword>
<keyword id="KW-0808">Transferase</keyword>
<gene>
    <name evidence="3" type="primary">FPPS</name>
</gene>